<gene>
    <name evidence="7" type="primary">LTPG3</name>
    <name evidence="9" type="ordered locus">At1g18280</name>
    <name evidence="10" type="ORF">F15H18.20</name>
    <name evidence="11" type="ORF">T10O22.25</name>
</gene>
<accession>Q9LE56</accession>
<accession>A0ME74</accession>
<keyword id="KW-1003">Cell membrane</keyword>
<keyword id="KW-1015">Disulfide bond</keyword>
<keyword id="KW-0325">Glycoprotein</keyword>
<keyword id="KW-0336">GPI-anchor</keyword>
<keyword id="KW-0378">Hydrolase</keyword>
<keyword id="KW-0449">Lipoprotein</keyword>
<keyword id="KW-0472">Membrane</keyword>
<keyword id="KW-0645">Protease</keyword>
<keyword id="KW-1185">Reference proteome</keyword>
<keyword id="KW-0732">Signal</keyword>
<comment type="function">
    <text evidence="6">Lipid transfer protein involved in seed and ovule maturation and development, probably by regulating the fatty acids homeostasis during suberin and sporopollenin biosynthesis or deposition.</text>
</comment>
<comment type="subcellular location">
    <subcellularLocation>
        <location evidence="2">Cell membrane</location>
        <topology evidence="2">Lipid-anchor</topology>
        <topology evidence="2">GPI-anchor</topology>
    </subcellularLocation>
</comment>
<comment type="tissue specificity">
    <text evidence="5 6">Restricted to stamen, pollen and sporophytic tissues (PubMed:14671020, PubMed:24460633). Also detected, at low levels, in stems and leaves (PubMed:14671020).</text>
</comment>
<comment type="disruption phenotype">
    <text evidence="6">Inability to limit tetrazolium salt uptake in seeds, development of hair-like structures on seeds, altered pollen morphologies, deformed or collapsed, and decreased levels of omega-hydroxy fatty acids in seed coats.</text>
</comment>
<comment type="similarity">
    <text evidence="8">Belongs to the plant LTP family.</text>
</comment>
<comment type="sequence caution" evidence="8">
    <conflict type="erroneous termination">
        <sequence resource="EMBL-CDS" id="ABK28401"/>
    </conflict>
    <text>Extended C-terminus.</text>
</comment>
<proteinExistence type="evidence at transcript level"/>
<organism>
    <name type="scientific">Arabidopsis thaliana</name>
    <name type="common">Mouse-ear cress</name>
    <dbReference type="NCBI Taxonomy" id="3702"/>
    <lineage>
        <taxon>Eukaryota</taxon>
        <taxon>Viridiplantae</taxon>
        <taxon>Streptophyta</taxon>
        <taxon>Embryophyta</taxon>
        <taxon>Tracheophyta</taxon>
        <taxon>Spermatophyta</taxon>
        <taxon>Magnoliopsida</taxon>
        <taxon>eudicotyledons</taxon>
        <taxon>Gunneridae</taxon>
        <taxon>Pentapetalae</taxon>
        <taxon>rosids</taxon>
        <taxon>malvids</taxon>
        <taxon>Brassicales</taxon>
        <taxon>Brassicaceae</taxon>
        <taxon>Camelineae</taxon>
        <taxon>Arabidopsis</taxon>
    </lineage>
</organism>
<reference key="1">
    <citation type="journal article" date="2000" name="Nature">
        <title>Sequence and analysis of chromosome 1 of the plant Arabidopsis thaliana.</title>
        <authorList>
            <person name="Theologis A."/>
            <person name="Ecker J.R."/>
            <person name="Palm C.J."/>
            <person name="Federspiel N.A."/>
            <person name="Kaul S."/>
            <person name="White O."/>
            <person name="Alonso J."/>
            <person name="Altafi H."/>
            <person name="Araujo R."/>
            <person name="Bowman C.L."/>
            <person name="Brooks S.Y."/>
            <person name="Buehler E."/>
            <person name="Chan A."/>
            <person name="Chao Q."/>
            <person name="Chen H."/>
            <person name="Cheuk R.F."/>
            <person name="Chin C.W."/>
            <person name="Chung M.K."/>
            <person name="Conn L."/>
            <person name="Conway A.B."/>
            <person name="Conway A.R."/>
            <person name="Creasy T.H."/>
            <person name="Dewar K."/>
            <person name="Dunn P."/>
            <person name="Etgu P."/>
            <person name="Feldblyum T.V."/>
            <person name="Feng J.-D."/>
            <person name="Fong B."/>
            <person name="Fujii C.Y."/>
            <person name="Gill J.E."/>
            <person name="Goldsmith A.D."/>
            <person name="Haas B."/>
            <person name="Hansen N.F."/>
            <person name="Hughes B."/>
            <person name="Huizar L."/>
            <person name="Hunter J.L."/>
            <person name="Jenkins J."/>
            <person name="Johnson-Hopson C."/>
            <person name="Khan S."/>
            <person name="Khaykin E."/>
            <person name="Kim C.J."/>
            <person name="Koo H.L."/>
            <person name="Kremenetskaia I."/>
            <person name="Kurtz D.B."/>
            <person name="Kwan A."/>
            <person name="Lam B."/>
            <person name="Langin-Hooper S."/>
            <person name="Lee A."/>
            <person name="Lee J.M."/>
            <person name="Lenz C.A."/>
            <person name="Li J.H."/>
            <person name="Li Y.-P."/>
            <person name="Lin X."/>
            <person name="Liu S.X."/>
            <person name="Liu Z.A."/>
            <person name="Luros J.S."/>
            <person name="Maiti R."/>
            <person name="Marziali A."/>
            <person name="Militscher J."/>
            <person name="Miranda M."/>
            <person name="Nguyen M."/>
            <person name="Nierman W.C."/>
            <person name="Osborne B.I."/>
            <person name="Pai G."/>
            <person name="Peterson J."/>
            <person name="Pham P.K."/>
            <person name="Rizzo M."/>
            <person name="Rooney T."/>
            <person name="Rowley D."/>
            <person name="Sakano H."/>
            <person name="Salzberg S.L."/>
            <person name="Schwartz J.R."/>
            <person name="Shinn P."/>
            <person name="Southwick A.M."/>
            <person name="Sun H."/>
            <person name="Tallon L.J."/>
            <person name="Tambunga G."/>
            <person name="Toriumi M.J."/>
            <person name="Town C.D."/>
            <person name="Utterback T."/>
            <person name="Van Aken S."/>
            <person name="Vaysberg M."/>
            <person name="Vysotskaia V.S."/>
            <person name="Walker M."/>
            <person name="Wu D."/>
            <person name="Yu G."/>
            <person name="Fraser C.M."/>
            <person name="Venter J.C."/>
            <person name="Davis R.W."/>
        </authorList>
    </citation>
    <scope>NUCLEOTIDE SEQUENCE [LARGE SCALE GENOMIC DNA]</scope>
    <source>
        <strain>cv. Columbia</strain>
    </source>
</reference>
<reference key="2">
    <citation type="journal article" date="2017" name="Plant J.">
        <title>Araport11: a complete reannotation of the Arabidopsis thaliana reference genome.</title>
        <authorList>
            <person name="Cheng C.Y."/>
            <person name="Krishnakumar V."/>
            <person name="Chan A.P."/>
            <person name="Thibaud-Nissen F."/>
            <person name="Schobel S."/>
            <person name="Town C.D."/>
        </authorList>
    </citation>
    <scope>GENOME REANNOTATION</scope>
    <source>
        <strain>cv. Columbia</strain>
    </source>
</reference>
<reference key="3">
    <citation type="journal article" date="2006" name="Plant Biotechnol. J.">
        <title>Simultaneous high-throughput recombinational cloning of open reading frames in closed and open configurations.</title>
        <authorList>
            <person name="Underwood B.A."/>
            <person name="Vanderhaeghen R."/>
            <person name="Whitford R."/>
            <person name="Town C.D."/>
            <person name="Hilson P."/>
        </authorList>
    </citation>
    <scope>NUCLEOTIDE SEQUENCE [LARGE SCALE MRNA]</scope>
    <source>
        <strain>cv. Columbia</strain>
    </source>
</reference>
<reference key="4">
    <citation type="submission" date="2006-06" db="EMBL/GenBank/DDBJ databases">
        <title>Arabidopsis ORF clones.</title>
        <authorList>
            <person name="Kim C.J."/>
            <person name="Chen H."/>
            <person name="Quinitio C."/>
            <person name="Shinn P."/>
            <person name="Ecker J.R."/>
        </authorList>
    </citation>
    <scope>NUCLEOTIDE SEQUENCE [LARGE SCALE MRNA]</scope>
    <source>
        <strain>cv. Columbia</strain>
    </source>
</reference>
<reference key="5">
    <citation type="submission" date="2002-03" db="EMBL/GenBank/DDBJ databases">
        <title>Full-length cDNA from Arabidopsis thaliana.</title>
        <authorList>
            <person name="Brover V.V."/>
            <person name="Troukhan M.E."/>
            <person name="Alexandrov N.A."/>
            <person name="Lu Y.-P."/>
            <person name="Flavell R.B."/>
            <person name="Feldmann K.A."/>
        </authorList>
    </citation>
    <scope>NUCLEOTIDE SEQUENCE [LARGE SCALE MRNA]</scope>
</reference>
<reference key="6">
    <citation type="journal article" date="2004" name="Plant Cell">
        <title>SETH1 and SETH2, two components of the glycosylphosphatidylinositol anchor biosynthetic pathway, are required for pollen germination and tube growth in Arabidopsis.</title>
        <authorList>
            <person name="Lalanne E."/>
            <person name="Honys D."/>
            <person name="Johnson A."/>
            <person name="Borner G.H.H."/>
            <person name="Lilley K.S."/>
            <person name="Dupree P."/>
            <person name="Grossniklaus U."/>
            <person name="Twell D."/>
        </authorList>
    </citation>
    <scope>TISSUE SPECIFICITY</scope>
</reference>
<reference key="7">
    <citation type="journal article" date="2013" name="Arabidopsis Book">
        <title>Acyl-lipid metabolism.</title>
        <authorList>
            <person name="Li-Beisson Y."/>
            <person name="Shorrosh B."/>
            <person name="Beisson F."/>
            <person name="Andersson M.X."/>
            <person name="Arondel V."/>
            <person name="Bates P.D."/>
            <person name="Baud S."/>
            <person name="Bird D."/>
            <person name="Debono A."/>
            <person name="Durrett T.P."/>
            <person name="Franke R.B."/>
            <person name="Graham I.A."/>
            <person name="Katayama K."/>
            <person name="Kelly A.A."/>
            <person name="Larson T."/>
            <person name="Markham J.E."/>
            <person name="Miquel M."/>
            <person name="Molina I."/>
            <person name="Nishida I."/>
            <person name="Rowland O."/>
            <person name="Samuels L."/>
            <person name="Schmid K.M."/>
            <person name="Wada H."/>
            <person name="Welti R."/>
            <person name="Xu C."/>
            <person name="Zallot R."/>
            <person name="Ohlrogge J."/>
        </authorList>
    </citation>
    <scope>REVIEW</scope>
</reference>
<reference key="8">
    <citation type="journal article" date="2013" name="Plant Mol. Biol.">
        <title>Coexpression patterns indicate that GPI-anchored non-specific lipid transfer proteins are involved in accumulation of cuticular wax, suberin and sporopollenin.</title>
        <authorList>
            <person name="Edstam M.M."/>
            <person name="Blomqvist K."/>
            <person name="Ekloef A."/>
            <person name="Wennergren U."/>
            <person name="Edqvist J."/>
        </authorList>
    </citation>
    <scope>TISSUE SPECIFICITY</scope>
    <scope>GENE FAMILY</scope>
    <scope>NOMENCLATURE</scope>
    <source>
        <strain>cv. Columbia</strain>
    </source>
</reference>
<reference key="9">
    <citation type="journal article" date="2014" name="Physiol. Plantarum">
        <title>Involvement of GPI-anchored lipid transfer proteins in the development of seed coats and pollen in Arabidopsis thaliana.</title>
        <authorList>
            <person name="Edstam M.M."/>
            <person name="Edqvist J."/>
        </authorList>
    </citation>
    <scope>FUNCTION</scope>
    <scope>DISRUPTION PHENOTYPE</scope>
    <scope>GENE FAMILY</scope>
    <source>
        <strain>cv. Columbia</strain>
    </source>
</reference>
<reference key="10">
    <citation type="journal article" date="2019" name="Mol. Plant Pathol.">
        <title>Involvement of lipid transfer proteins in resistance against a non-host powdery mildew in Arabidopsis thaliana.</title>
        <authorList>
            <person name="Fahlberg P."/>
            <person name="Buhot N."/>
            <person name="Johansson O.N."/>
            <person name="Andersson M.X."/>
        </authorList>
    </citation>
    <scope>GENE FAMILY</scope>
    <scope>NOMENCLATURE</scope>
    <source>
        <strain>cv. Columbia</strain>
    </source>
</reference>
<sequence>MEAVRFAVAVVLVFCYVTSSNAQMTSPPSGGAGGDAHSLPCIQKLMPCQPYLHLATPPPATCCMPLNEIVAKDATCLCAVFNNVDMLKSLNLTKENALDLPKACGAKADVSLCKTSAGTNSSSTPPATPKTPPASSTSTGTGSGSTGNAAPSTAKPTSSAPAINFGGLSFASAVVATLFF</sequence>
<evidence type="ECO:0000250" key="1">
    <source>
        <dbReference type="UniProtKB" id="A0A0B4JDK1"/>
    </source>
</evidence>
<evidence type="ECO:0000255" key="2"/>
<evidence type="ECO:0000255" key="3">
    <source>
        <dbReference type="PROSITE-ProRule" id="PRU00498"/>
    </source>
</evidence>
<evidence type="ECO:0000256" key="4">
    <source>
        <dbReference type="SAM" id="MobiDB-lite"/>
    </source>
</evidence>
<evidence type="ECO:0000269" key="5">
    <source>
    </source>
</evidence>
<evidence type="ECO:0000269" key="6">
    <source>
    </source>
</evidence>
<evidence type="ECO:0000303" key="7">
    <source>
    </source>
</evidence>
<evidence type="ECO:0000305" key="8"/>
<evidence type="ECO:0000312" key="9">
    <source>
        <dbReference type="Araport" id="AT1G18280"/>
    </source>
</evidence>
<evidence type="ECO:0000312" key="10">
    <source>
        <dbReference type="EMBL" id="AAF25992.1"/>
    </source>
</evidence>
<evidence type="ECO:0000312" key="11">
    <source>
        <dbReference type="EMBL" id="AAF78376.1"/>
    </source>
</evidence>
<name>LTPG3_ARATH</name>
<protein>
    <recommendedName>
        <fullName evidence="7">Non-specific lipid transfer protein GPI-anchored 3</fullName>
        <shortName evidence="7">AtLTPG-3</shortName>
        <shortName evidence="7">Protein LTP-GPI-ANCHORED 3</shortName>
    </recommendedName>
</protein>
<dbReference type="EMBL" id="AC013354">
    <property type="protein sequence ID" value="AAF25992.1"/>
    <property type="molecule type" value="Genomic_DNA"/>
</dbReference>
<dbReference type="EMBL" id="AC069551">
    <property type="protein sequence ID" value="AAF78376.1"/>
    <property type="molecule type" value="Genomic_DNA"/>
</dbReference>
<dbReference type="EMBL" id="CP002684">
    <property type="protein sequence ID" value="AEE29697.1"/>
    <property type="molecule type" value="Genomic_DNA"/>
</dbReference>
<dbReference type="EMBL" id="DQ446260">
    <property type="protein sequence ID" value="ABE65630.1"/>
    <property type="molecule type" value="mRNA"/>
</dbReference>
<dbReference type="EMBL" id="DQ652842">
    <property type="protein sequence ID" value="ABK28401.1"/>
    <property type="status" value="ALT_SEQ"/>
    <property type="molecule type" value="mRNA"/>
</dbReference>
<dbReference type="EMBL" id="BT025741">
    <property type="protein sequence ID" value="ABF83631.1"/>
    <property type="molecule type" value="mRNA"/>
</dbReference>
<dbReference type="EMBL" id="AY086971">
    <property type="protein sequence ID" value="AAM64534.1"/>
    <property type="molecule type" value="mRNA"/>
</dbReference>
<dbReference type="RefSeq" id="NP_173264.1">
    <property type="nucleotide sequence ID" value="NM_101686.5"/>
</dbReference>
<dbReference type="FunCoup" id="Q9LE56">
    <property type="interactions" value="8"/>
</dbReference>
<dbReference type="STRING" id="3702.Q9LE56"/>
<dbReference type="GlyCosmos" id="Q9LE56">
    <property type="glycosylation" value="2 sites, No reported glycans"/>
</dbReference>
<dbReference type="GlyGen" id="Q9LE56">
    <property type="glycosylation" value="2 sites"/>
</dbReference>
<dbReference type="PaxDb" id="3702-AT1G18280.1"/>
<dbReference type="ProteomicsDB" id="190011"/>
<dbReference type="EnsemblPlants" id="AT1G18280.1">
    <property type="protein sequence ID" value="AT1G18280.1"/>
    <property type="gene ID" value="AT1G18280"/>
</dbReference>
<dbReference type="GeneID" id="838408"/>
<dbReference type="Gramene" id="AT1G18280.1">
    <property type="protein sequence ID" value="AT1G18280.1"/>
    <property type="gene ID" value="AT1G18280"/>
</dbReference>
<dbReference type="KEGG" id="ath:AT1G18280"/>
<dbReference type="Araport" id="AT1G18280"/>
<dbReference type="TAIR" id="AT1G18280">
    <property type="gene designation" value="LTPG3"/>
</dbReference>
<dbReference type="eggNOG" id="ENOG502S5G2">
    <property type="taxonomic scope" value="Eukaryota"/>
</dbReference>
<dbReference type="HOGENOM" id="CLU_116928_3_1_1"/>
<dbReference type="InParanoid" id="Q9LE56"/>
<dbReference type="OMA" id="VAKDATC"/>
<dbReference type="OrthoDB" id="1925812at2759"/>
<dbReference type="PhylomeDB" id="Q9LE56"/>
<dbReference type="PRO" id="PR:Q9LE56"/>
<dbReference type="Proteomes" id="UP000006548">
    <property type="component" value="Chromosome 1"/>
</dbReference>
<dbReference type="ExpressionAtlas" id="Q9LE56">
    <property type="expression patterns" value="baseline and differential"/>
</dbReference>
<dbReference type="GO" id="GO:0005886">
    <property type="term" value="C:plasma membrane"/>
    <property type="evidence" value="ECO:0007669"/>
    <property type="project" value="UniProtKB-SubCell"/>
</dbReference>
<dbReference type="GO" id="GO:0098552">
    <property type="term" value="C:side of membrane"/>
    <property type="evidence" value="ECO:0007669"/>
    <property type="project" value="UniProtKB-KW"/>
</dbReference>
<dbReference type="GO" id="GO:0008233">
    <property type="term" value="F:peptidase activity"/>
    <property type="evidence" value="ECO:0007669"/>
    <property type="project" value="UniProtKB-KW"/>
</dbReference>
<dbReference type="GO" id="GO:0006508">
    <property type="term" value="P:proteolysis"/>
    <property type="evidence" value="ECO:0007669"/>
    <property type="project" value="UniProtKB-KW"/>
</dbReference>
<dbReference type="CDD" id="cd00010">
    <property type="entry name" value="AAI_LTSS"/>
    <property type="match status" value="1"/>
</dbReference>
<dbReference type="Gene3D" id="1.10.110.10">
    <property type="entry name" value="Plant lipid-transfer and hydrophobic proteins"/>
    <property type="match status" value="1"/>
</dbReference>
<dbReference type="InterPro" id="IPR036312">
    <property type="entry name" value="Bifun_inhib/LTP/seed_sf"/>
</dbReference>
<dbReference type="InterPro" id="IPR016140">
    <property type="entry name" value="Bifunc_inhib/LTP/seed_store"/>
</dbReference>
<dbReference type="InterPro" id="IPR043325">
    <property type="entry name" value="LTSS"/>
</dbReference>
<dbReference type="PANTHER" id="PTHR33044">
    <property type="entry name" value="BIFUNCTIONAL INHIBITOR/LIPID-TRANSFER PROTEIN/SEED STORAGE 2S ALBUMIN SUPERFAMILY PROTEIN-RELATED"/>
    <property type="match status" value="1"/>
</dbReference>
<dbReference type="Pfam" id="PF14368">
    <property type="entry name" value="LTP_2"/>
    <property type="match status" value="1"/>
</dbReference>
<dbReference type="SMART" id="SM00499">
    <property type="entry name" value="AAI"/>
    <property type="match status" value="1"/>
</dbReference>
<dbReference type="SUPFAM" id="SSF47699">
    <property type="entry name" value="Bifunctional inhibitor/lipid-transfer protein/seed storage 2S albumin"/>
    <property type="match status" value="1"/>
</dbReference>
<feature type="signal peptide" evidence="2">
    <location>
        <begin position="1"/>
        <end position="22"/>
    </location>
</feature>
<feature type="chain" id="PRO_5014312954" description="Non-specific lipid transfer protein GPI-anchored 3">
    <location>
        <begin position="23"/>
        <end position="158"/>
    </location>
</feature>
<feature type="propeptide" id="PRO_0000451636" description="Removed in mature form" evidence="2">
    <location>
        <begin position="159"/>
        <end position="180"/>
    </location>
</feature>
<feature type="region of interest" description="Disordered" evidence="4">
    <location>
        <begin position="116"/>
        <end position="156"/>
    </location>
</feature>
<feature type="compositionally biased region" description="Low complexity" evidence="4">
    <location>
        <begin position="116"/>
        <end position="125"/>
    </location>
</feature>
<feature type="compositionally biased region" description="Low complexity" evidence="4">
    <location>
        <begin position="133"/>
        <end position="156"/>
    </location>
</feature>
<feature type="lipid moiety-binding region" description="GPI-anchor amidated serine" evidence="2">
    <location>
        <position position="158"/>
    </location>
</feature>
<feature type="glycosylation site" description="N-linked (GlcNAc...) asparagine" evidence="3">
    <location>
        <position position="91"/>
    </location>
</feature>
<feature type="glycosylation site" description="N-linked (GlcNAc...) asparagine" evidence="3">
    <location>
        <position position="120"/>
    </location>
</feature>
<feature type="disulfide bond" evidence="1">
    <location>
        <begin position="41"/>
        <end position="78"/>
    </location>
</feature>
<feature type="disulfide bond" evidence="1">
    <location>
        <begin position="48"/>
        <end position="62"/>
    </location>
</feature>
<feature type="disulfide bond" evidence="1">
    <location>
        <begin position="63"/>
        <end position="104"/>
    </location>
</feature>
<feature type="disulfide bond" evidence="1">
    <location>
        <begin position="76"/>
        <end position="113"/>
    </location>
</feature>